<reference key="1">
    <citation type="submission" date="2008-01" db="EMBL/GenBank/DDBJ databases">
        <title>Complete sequence of Shewanella halifaxensis HAW-EB4.</title>
        <authorList>
            <consortium name="US DOE Joint Genome Institute"/>
            <person name="Copeland A."/>
            <person name="Lucas S."/>
            <person name="Lapidus A."/>
            <person name="Glavina del Rio T."/>
            <person name="Dalin E."/>
            <person name="Tice H."/>
            <person name="Bruce D."/>
            <person name="Goodwin L."/>
            <person name="Pitluck S."/>
            <person name="Sims D."/>
            <person name="Brettin T."/>
            <person name="Detter J.C."/>
            <person name="Han C."/>
            <person name="Kuske C.R."/>
            <person name="Schmutz J."/>
            <person name="Larimer F."/>
            <person name="Land M."/>
            <person name="Hauser L."/>
            <person name="Kyrpides N."/>
            <person name="Kim E."/>
            <person name="Zhao J.-S."/>
            <person name="Richardson P."/>
        </authorList>
    </citation>
    <scope>NUCLEOTIDE SEQUENCE [LARGE SCALE GENOMIC DNA]</scope>
    <source>
        <strain>HAW-EB4</strain>
    </source>
</reference>
<protein>
    <recommendedName>
        <fullName evidence="1">Cyclic pyranopterin monophosphate synthase</fullName>
        <ecNumber evidence="1">4.6.1.17</ecNumber>
    </recommendedName>
    <alternativeName>
        <fullName evidence="1">Molybdenum cofactor biosynthesis protein C</fullName>
    </alternativeName>
</protein>
<evidence type="ECO:0000255" key="1">
    <source>
        <dbReference type="HAMAP-Rule" id="MF_01224"/>
    </source>
</evidence>
<name>MOAC_SHEHH</name>
<proteinExistence type="inferred from homology"/>
<dbReference type="EC" id="4.6.1.17" evidence="1"/>
<dbReference type="EMBL" id="CP000931">
    <property type="protein sequence ID" value="ABZ74700.1"/>
    <property type="molecule type" value="Genomic_DNA"/>
</dbReference>
<dbReference type="RefSeq" id="WP_012275257.1">
    <property type="nucleotide sequence ID" value="NC_010334.1"/>
</dbReference>
<dbReference type="SMR" id="B0TMA7"/>
<dbReference type="STRING" id="458817.Shal_0124"/>
<dbReference type="KEGG" id="shl:Shal_0124"/>
<dbReference type="eggNOG" id="COG0315">
    <property type="taxonomic scope" value="Bacteria"/>
</dbReference>
<dbReference type="HOGENOM" id="CLU_074693_1_1_6"/>
<dbReference type="OrthoDB" id="9794429at2"/>
<dbReference type="UniPathway" id="UPA00344"/>
<dbReference type="Proteomes" id="UP000001317">
    <property type="component" value="Chromosome"/>
</dbReference>
<dbReference type="GO" id="GO:0061799">
    <property type="term" value="F:cyclic pyranopterin monophosphate synthase activity"/>
    <property type="evidence" value="ECO:0007669"/>
    <property type="project" value="UniProtKB-UniRule"/>
</dbReference>
<dbReference type="GO" id="GO:0061798">
    <property type="term" value="F:GTP 3',8'-cyclase activity"/>
    <property type="evidence" value="ECO:0007669"/>
    <property type="project" value="TreeGrafter"/>
</dbReference>
<dbReference type="GO" id="GO:0006777">
    <property type="term" value="P:Mo-molybdopterin cofactor biosynthetic process"/>
    <property type="evidence" value="ECO:0007669"/>
    <property type="project" value="UniProtKB-UniRule"/>
</dbReference>
<dbReference type="CDD" id="cd01420">
    <property type="entry name" value="MoaC_PE"/>
    <property type="match status" value="1"/>
</dbReference>
<dbReference type="FunFam" id="3.30.70.640:FF:000001">
    <property type="entry name" value="Cyclic pyranopterin monophosphate synthase"/>
    <property type="match status" value="1"/>
</dbReference>
<dbReference type="Gene3D" id="3.30.70.640">
    <property type="entry name" value="Molybdopterin cofactor biosynthesis C (MoaC) domain"/>
    <property type="match status" value="1"/>
</dbReference>
<dbReference type="HAMAP" id="MF_01224_B">
    <property type="entry name" value="MoaC_B"/>
    <property type="match status" value="1"/>
</dbReference>
<dbReference type="InterPro" id="IPR023045">
    <property type="entry name" value="MoaC"/>
</dbReference>
<dbReference type="InterPro" id="IPR047594">
    <property type="entry name" value="MoaC_bact/euk"/>
</dbReference>
<dbReference type="InterPro" id="IPR036522">
    <property type="entry name" value="MoaC_sf"/>
</dbReference>
<dbReference type="InterPro" id="IPR050105">
    <property type="entry name" value="MoCo_biosynth_MoaA/MoaC"/>
</dbReference>
<dbReference type="InterPro" id="IPR002820">
    <property type="entry name" value="Mopterin_CF_biosynth-C_dom"/>
</dbReference>
<dbReference type="NCBIfam" id="TIGR00581">
    <property type="entry name" value="moaC"/>
    <property type="match status" value="1"/>
</dbReference>
<dbReference type="NCBIfam" id="NF006870">
    <property type="entry name" value="PRK09364.1"/>
    <property type="match status" value="1"/>
</dbReference>
<dbReference type="PANTHER" id="PTHR22960:SF0">
    <property type="entry name" value="MOLYBDENUM COFACTOR BIOSYNTHESIS PROTEIN 1"/>
    <property type="match status" value="1"/>
</dbReference>
<dbReference type="PANTHER" id="PTHR22960">
    <property type="entry name" value="MOLYBDOPTERIN COFACTOR SYNTHESIS PROTEIN A"/>
    <property type="match status" value="1"/>
</dbReference>
<dbReference type="Pfam" id="PF01967">
    <property type="entry name" value="MoaC"/>
    <property type="match status" value="1"/>
</dbReference>
<dbReference type="SUPFAM" id="SSF55040">
    <property type="entry name" value="Molybdenum cofactor biosynthesis protein C, MoaC"/>
    <property type="match status" value="1"/>
</dbReference>
<comment type="function">
    <text evidence="1">Catalyzes the conversion of (8S)-3',8-cyclo-7,8-dihydroguanosine 5'-triphosphate to cyclic pyranopterin monophosphate (cPMP).</text>
</comment>
<comment type="catalytic activity">
    <reaction evidence="1">
        <text>(8S)-3',8-cyclo-7,8-dihydroguanosine 5'-triphosphate = cyclic pyranopterin phosphate + diphosphate</text>
        <dbReference type="Rhea" id="RHEA:49580"/>
        <dbReference type="ChEBI" id="CHEBI:33019"/>
        <dbReference type="ChEBI" id="CHEBI:59648"/>
        <dbReference type="ChEBI" id="CHEBI:131766"/>
        <dbReference type="EC" id="4.6.1.17"/>
    </reaction>
</comment>
<comment type="pathway">
    <text evidence="1">Cofactor biosynthesis; molybdopterin biosynthesis.</text>
</comment>
<comment type="subunit">
    <text evidence="1">Homohexamer; trimer of dimers.</text>
</comment>
<comment type="similarity">
    <text evidence="1">Belongs to the MoaC family.</text>
</comment>
<keyword id="KW-0456">Lyase</keyword>
<keyword id="KW-0501">Molybdenum cofactor biosynthesis</keyword>
<accession>B0TMA7</accession>
<feature type="chain" id="PRO_1000085686" description="Cyclic pyranopterin monophosphate synthase">
    <location>
        <begin position="1"/>
        <end position="158"/>
    </location>
</feature>
<feature type="active site" evidence="1">
    <location>
        <position position="129"/>
    </location>
</feature>
<feature type="binding site" evidence="1">
    <location>
        <begin position="76"/>
        <end position="78"/>
    </location>
    <ligand>
        <name>substrate</name>
    </ligand>
</feature>
<feature type="binding site" evidence="1">
    <location>
        <begin position="114"/>
        <end position="115"/>
    </location>
    <ligand>
        <name>substrate</name>
    </ligand>
</feature>
<gene>
    <name evidence="1" type="primary">moaC</name>
    <name type="ordered locus">Shal_0124</name>
</gene>
<sequence length="158" mass="17323">MTHAFTHINADGNAHMVDVTDKSVTEREARAEAYIEMASETLEMIMSGSHHKGDVFATARIAGIQAAKKTSDLIPLCHPLMLTKVEVELEAQPEHNRVWIRSLCKLSGKTGVEMEALTAASTAALTIYDMCKAVQKDMVISQVRLTEKRGGKSGHFKV</sequence>
<organism>
    <name type="scientific">Shewanella halifaxensis (strain HAW-EB4)</name>
    <dbReference type="NCBI Taxonomy" id="458817"/>
    <lineage>
        <taxon>Bacteria</taxon>
        <taxon>Pseudomonadati</taxon>
        <taxon>Pseudomonadota</taxon>
        <taxon>Gammaproteobacteria</taxon>
        <taxon>Alteromonadales</taxon>
        <taxon>Shewanellaceae</taxon>
        <taxon>Shewanella</taxon>
    </lineage>
</organism>